<accession>P28271</accession>
<accession>Q3TQ15</accession>
<accession>Q99K54</accession>
<sequence>MKNPFAHLAEPLDAAQPGKRFFNLNKLEDSRYGRLPFSIRVLLEAAVRNCDEFLVKKNDIENILNWNVMQHKNIEVPFKPARVILQDFTGVPAVVDFAAMRDAVKKLGGNPEKINPVCPADLVIDHSIQVDFNRRADSLQKNQDLEFERNKERFEFLKWGSQAFCNMRIIPPGSGIIHQVNLEYLARVVFDQDGCYYPDSLVGTDSHTTMIDGLGVLGWGVGGIEAEAVMLGQPISMVLPQVIGYKLMGKPHPLVTSTDIVLTITKHLRQVGVVGKFVEFFGPGVAQLSIADRATIANMCPEYGATAAFFPVDEVSIAYLLQTGREEDKVKHIQKYLQAVGMFRDFNDTSQDPDFTQVVELDLKTVVPCCSGPKRPQDKVAVSEMKKDFESCLGAKQGFKGFQVAPDRHNDRKTFLYSNSEFTLAHGSVVIAAITSCTNTSNPSVMLGAGLLAKKAVEAGLSVKPYIKTSLSPGSGVVTYYLRESGVMPYLSQLGFDVVGYGCMTCIGNSGPLPEPVVEAITQGDLVAVGVLSGNRNFEGRVHPNTRANYLASPPLVIAYAIAGTVRIDFEKEPLGVNAQGRQVFLKDIWPTRDEIQAVERQHVIPGMFKEVYQKIETVNKSWNALAAPSEKLYAWNPKSTYIKSPPFFESLTLDLQPPKSIVDAYVLLNLGDSVTTDHISPAGNIARNSPAARYLTNRGLTPREFNSYGSRRGNDAIMARGTFANIRLLNKFLNKQAPQTVHLPSGETLDVFDAAERYQQAGLPLIVLAGKEYGSGSSRDWAAKGPFLLGIKAVLAESYERIHRSNLVGMGVIPLEYLPGETADSLGLTGRERYTINIPEDLKPRMTVQIKLDTGKTFQAVMRFDTDVELTYFHNGGILNYMIRKMAQ</sequence>
<gene>
    <name type="primary">Aco1</name>
    <name type="synonym">Ireb1</name>
    <name type="synonym">Irebp</name>
</gene>
<dbReference type="EC" id="4.2.1.3" evidence="2"/>
<dbReference type="EMBL" id="X61147">
    <property type="protein sequence ID" value="CAA43455.1"/>
    <property type="molecule type" value="mRNA"/>
</dbReference>
<dbReference type="EMBL" id="AK163985">
    <property type="protein sequence ID" value="BAE37570.1"/>
    <property type="molecule type" value="mRNA"/>
</dbReference>
<dbReference type="EMBL" id="AL831793">
    <property type="status" value="NOT_ANNOTATED_CDS"/>
    <property type="molecule type" value="Genomic_DNA"/>
</dbReference>
<dbReference type="EMBL" id="CH466538">
    <property type="protein sequence ID" value="EDL05446.1"/>
    <property type="molecule type" value="Genomic_DNA"/>
</dbReference>
<dbReference type="EMBL" id="BC005454">
    <property type="protein sequence ID" value="AAH05454.1"/>
    <property type="molecule type" value="mRNA"/>
</dbReference>
<dbReference type="CCDS" id="CCDS18042.1"/>
<dbReference type="PIR" id="S18720">
    <property type="entry name" value="S18720"/>
</dbReference>
<dbReference type="RefSeq" id="NP_001406881.1">
    <property type="nucleotide sequence ID" value="NM_001419952.1"/>
</dbReference>
<dbReference type="RefSeq" id="NP_031412.2">
    <property type="nucleotide sequence ID" value="NM_007386.3"/>
</dbReference>
<dbReference type="SMR" id="P28271"/>
<dbReference type="BioGRID" id="197924">
    <property type="interactions" value="10"/>
</dbReference>
<dbReference type="FunCoup" id="P28271">
    <property type="interactions" value="2696"/>
</dbReference>
<dbReference type="IntAct" id="P28271">
    <property type="interactions" value="1"/>
</dbReference>
<dbReference type="MINT" id="P28271"/>
<dbReference type="STRING" id="10090.ENSMUSP00000100038"/>
<dbReference type="GlyGen" id="P28271">
    <property type="glycosylation" value="1 site, 1 O-linked glycan (1 site)"/>
</dbReference>
<dbReference type="iPTMnet" id="P28271"/>
<dbReference type="PhosphoSitePlus" id="P28271"/>
<dbReference type="SwissPalm" id="P28271"/>
<dbReference type="REPRODUCTION-2DPAGE" id="P28271"/>
<dbReference type="jPOST" id="P28271"/>
<dbReference type="PaxDb" id="10090-ENSMUSP00000100038"/>
<dbReference type="PeptideAtlas" id="P28271"/>
<dbReference type="ProteomicsDB" id="285594"/>
<dbReference type="Pumba" id="P28271"/>
<dbReference type="Antibodypedia" id="10637">
    <property type="antibodies" value="579 antibodies from 39 providers"/>
</dbReference>
<dbReference type="DNASU" id="11428"/>
<dbReference type="Ensembl" id="ENSMUST00000102973.4">
    <property type="protein sequence ID" value="ENSMUSP00000100038.4"/>
    <property type="gene ID" value="ENSMUSG00000028405.10"/>
</dbReference>
<dbReference type="GeneID" id="11428"/>
<dbReference type="KEGG" id="mmu:11428"/>
<dbReference type="UCSC" id="uc008shd.1">
    <property type="organism name" value="mouse"/>
</dbReference>
<dbReference type="AGR" id="MGI:87879"/>
<dbReference type="CTD" id="48"/>
<dbReference type="MGI" id="MGI:87879">
    <property type="gene designation" value="Aco1"/>
</dbReference>
<dbReference type="VEuPathDB" id="HostDB:ENSMUSG00000028405"/>
<dbReference type="eggNOG" id="KOG0452">
    <property type="taxonomic scope" value="Eukaryota"/>
</dbReference>
<dbReference type="GeneTree" id="ENSGT00940000157772"/>
<dbReference type="HOGENOM" id="CLU_013476_2_1_1"/>
<dbReference type="InParanoid" id="P28271"/>
<dbReference type="OMA" id="NGGIMQY"/>
<dbReference type="OrthoDB" id="2279155at2759"/>
<dbReference type="PhylomeDB" id="P28271"/>
<dbReference type="TreeFam" id="TF313476"/>
<dbReference type="BRENDA" id="4.2.1.3">
    <property type="organism ID" value="3474"/>
</dbReference>
<dbReference type="Reactome" id="R-MMU-389542">
    <property type="pathway name" value="NADPH regeneration"/>
</dbReference>
<dbReference type="Reactome" id="R-MMU-917937">
    <property type="pathway name" value="Iron uptake and transport"/>
</dbReference>
<dbReference type="BioGRID-ORCS" id="11428">
    <property type="hits" value="1 hit in 80 CRISPR screens"/>
</dbReference>
<dbReference type="ChiTaRS" id="Aco1">
    <property type="organism name" value="mouse"/>
</dbReference>
<dbReference type="PRO" id="PR:P28271"/>
<dbReference type="Proteomes" id="UP000000589">
    <property type="component" value="Chromosome 4"/>
</dbReference>
<dbReference type="RNAct" id="P28271">
    <property type="molecule type" value="protein"/>
</dbReference>
<dbReference type="Bgee" id="ENSMUSG00000028405">
    <property type="expression patterns" value="Expressed in aorta tunica adventitia and 255 other cell types or tissues"/>
</dbReference>
<dbReference type="GO" id="GO:0005737">
    <property type="term" value="C:cytoplasm"/>
    <property type="evidence" value="ECO:0000314"/>
    <property type="project" value="MGI"/>
</dbReference>
<dbReference type="GO" id="GO:0005829">
    <property type="term" value="C:cytosol"/>
    <property type="evidence" value="ECO:0000314"/>
    <property type="project" value="MGI"/>
</dbReference>
<dbReference type="GO" id="GO:0005783">
    <property type="term" value="C:endoplasmic reticulum"/>
    <property type="evidence" value="ECO:0000266"/>
    <property type="project" value="MGI"/>
</dbReference>
<dbReference type="GO" id="GO:0005794">
    <property type="term" value="C:Golgi apparatus"/>
    <property type="evidence" value="ECO:0000266"/>
    <property type="project" value="MGI"/>
</dbReference>
<dbReference type="GO" id="GO:0005739">
    <property type="term" value="C:mitochondrion"/>
    <property type="evidence" value="ECO:0007005"/>
    <property type="project" value="MGI"/>
</dbReference>
<dbReference type="GO" id="GO:0051538">
    <property type="term" value="F:3 iron, 4 sulfur cluster binding"/>
    <property type="evidence" value="ECO:0007669"/>
    <property type="project" value="Ensembl"/>
</dbReference>
<dbReference type="GO" id="GO:0051539">
    <property type="term" value="F:4 iron, 4 sulfur cluster binding"/>
    <property type="evidence" value="ECO:0000250"/>
    <property type="project" value="UniProtKB"/>
</dbReference>
<dbReference type="GO" id="GO:0003994">
    <property type="term" value="F:aconitate hydratase activity"/>
    <property type="evidence" value="ECO:0000314"/>
    <property type="project" value="MGI"/>
</dbReference>
<dbReference type="GO" id="GO:0030350">
    <property type="term" value="F:iron-responsive element binding"/>
    <property type="evidence" value="ECO:0000314"/>
    <property type="project" value="MGI"/>
</dbReference>
<dbReference type="GO" id="GO:0046872">
    <property type="term" value="F:metal ion binding"/>
    <property type="evidence" value="ECO:0007669"/>
    <property type="project" value="UniProtKB-KW"/>
</dbReference>
<dbReference type="GO" id="GO:0006101">
    <property type="term" value="P:citrate metabolic process"/>
    <property type="evidence" value="ECO:0000250"/>
    <property type="project" value="UniProtKB"/>
</dbReference>
<dbReference type="GO" id="GO:0050892">
    <property type="term" value="P:intestinal absorption"/>
    <property type="evidence" value="ECO:0000316"/>
    <property type="project" value="MGI"/>
</dbReference>
<dbReference type="GO" id="GO:0006879">
    <property type="term" value="P:intracellular iron ion homeostasis"/>
    <property type="evidence" value="ECO:0000315"/>
    <property type="project" value="MGI"/>
</dbReference>
<dbReference type="GO" id="GO:0006740">
    <property type="term" value="P:NADPH regeneration"/>
    <property type="evidence" value="ECO:0000315"/>
    <property type="project" value="MGI"/>
</dbReference>
<dbReference type="GO" id="GO:0009791">
    <property type="term" value="P:post-embryonic development"/>
    <property type="evidence" value="ECO:0000316"/>
    <property type="project" value="MGI"/>
</dbReference>
<dbReference type="GO" id="GO:0010468">
    <property type="term" value="P:regulation of gene expression"/>
    <property type="evidence" value="ECO:0000316"/>
    <property type="project" value="MGI"/>
</dbReference>
<dbReference type="GO" id="GO:0006417">
    <property type="term" value="P:regulation of translation"/>
    <property type="evidence" value="ECO:0000315"/>
    <property type="project" value="MGI"/>
</dbReference>
<dbReference type="GO" id="GO:0010040">
    <property type="term" value="P:response to iron(II) ion"/>
    <property type="evidence" value="ECO:0000250"/>
    <property type="project" value="UniProtKB"/>
</dbReference>
<dbReference type="GO" id="GO:0006099">
    <property type="term" value="P:tricarboxylic acid cycle"/>
    <property type="evidence" value="ECO:0007669"/>
    <property type="project" value="UniProtKB-KW"/>
</dbReference>
<dbReference type="CDD" id="cd01586">
    <property type="entry name" value="AcnA_IRP"/>
    <property type="match status" value="1"/>
</dbReference>
<dbReference type="CDD" id="cd01580">
    <property type="entry name" value="AcnA_IRP_Swivel"/>
    <property type="match status" value="1"/>
</dbReference>
<dbReference type="FunFam" id="3.30.499.10:FF:000002">
    <property type="entry name" value="Aconitate hydratase"/>
    <property type="match status" value="1"/>
</dbReference>
<dbReference type="FunFam" id="3.30.499.10:FF:000005">
    <property type="entry name" value="cytoplasmic aconitate hydratase"/>
    <property type="match status" value="1"/>
</dbReference>
<dbReference type="FunFam" id="3.20.19.10:FF:000005">
    <property type="entry name" value="Iron-responsive element-binding protein 2"/>
    <property type="match status" value="1"/>
</dbReference>
<dbReference type="Gene3D" id="6.10.190.10">
    <property type="match status" value="1"/>
</dbReference>
<dbReference type="Gene3D" id="3.30.499.10">
    <property type="entry name" value="Aconitase, domain 3"/>
    <property type="match status" value="2"/>
</dbReference>
<dbReference type="Gene3D" id="3.20.19.10">
    <property type="entry name" value="Aconitase, domain 4"/>
    <property type="match status" value="1"/>
</dbReference>
<dbReference type="InterPro" id="IPR044137">
    <property type="entry name" value="AcnA_IRP_Swivel"/>
</dbReference>
<dbReference type="InterPro" id="IPR015931">
    <property type="entry name" value="Acnase/IPM_dHydase_lsu_aba_1/3"/>
</dbReference>
<dbReference type="InterPro" id="IPR001030">
    <property type="entry name" value="Acoase/IPM_deHydtase_lsu_aba"/>
</dbReference>
<dbReference type="InterPro" id="IPR015928">
    <property type="entry name" value="Aconitase/3IPM_dehydase_swvl"/>
</dbReference>
<dbReference type="InterPro" id="IPR006249">
    <property type="entry name" value="Aconitase/IRP2"/>
</dbReference>
<dbReference type="InterPro" id="IPR018136">
    <property type="entry name" value="Aconitase_4Fe-4S_BS"/>
</dbReference>
<dbReference type="InterPro" id="IPR036008">
    <property type="entry name" value="Aconitase_4Fe-4S_dom"/>
</dbReference>
<dbReference type="InterPro" id="IPR000573">
    <property type="entry name" value="AconitaseA/IPMdHydase_ssu_swvl"/>
</dbReference>
<dbReference type="NCBIfam" id="TIGR01341">
    <property type="entry name" value="aconitase_1"/>
    <property type="match status" value="1"/>
</dbReference>
<dbReference type="NCBIfam" id="NF006757">
    <property type="entry name" value="PRK09277.1"/>
    <property type="match status" value="1"/>
</dbReference>
<dbReference type="NCBIfam" id="NF009520">
    <property type="entry name" value="PRK12881.1"/>
    <property type="match status" value="1"/>
</dbReference>
<dbReference type="PANTHER" id="PTHR11670">
    <property type="entry name" value="ACONITASE/IRON-RESPONSIVE ELEMENT FAMILY MEMBER"/>
    <property type="match status" value="1"/>
</dbReference>
<dbReference type="Pfam" id="PF00330">
    <property type="entry name" value="Aconitase"/>
    <property type="match status" value="1"/>
</dbReference>
<dbReference type="Pfam" id="PF00694">
    <property type="entry name" value="Aconitase_C"/>
    <property type="match status" value="1"/>
</dbReference>
<dbReference type="PRINTS" id="PR00415">
    <property type="entry name" value="ACONITASE"/>
</dbReference>
<dbReference type="SUPFAM" id="SSF53732">
    <property type="entry name" value="Aconitase iron-sulfur domain"/>
    <property type="match status" value="1"/>
</dbReference>
<dbReference type="SUPFAM" id="SSF52016">
    <property type="entry name" value="LeuD/IlvD-like"/>
    <property type="match status" value="1"/>
</dbReference>
<dbReference type="PROSITE" id="PS00450">
    <property type="entry name" value="ACONITASE_1"/>
    <property type="match status" value="1"/>
</dbReference>
<dbReference type="PROSITE" id="PS01244">
    <property type="entry name" value="ACONITASE_2"/>
    <property type="match status" value="1"/>
</dbReference>
<organism>
    <name type="scientific">Mus musculus</name>
    <name type="common">Mouse</name>
    <dbReference type="NCBI Taxonomy" id="10090"/>
    <lineage>
        <taxon>Eukaryota</taxon>
        <taxon>Metazoa</taxon>
        <taxon>Chordata</taxon>
        <taxon>Craniata</taxon>
        <taxon>Vertebrata</taxon>
        <taxon>Euteleostomi</taxon>
        <taxon>Mammalia</taxon>
        <taxon>Eutheria</taxon>
        <taxon>Euarchontoglires</taxon>
        <taxon>Glires</taxon>
        <taxon>Rodentia</taxon>
        <taxon>Myomorpha</taxon>
        <taxon>Muroidea</taxon>
        <taxon>Muridae</taxon>
        <taxon>Murinae</taxon>
        <taxon>Mus</taxon>
        <taxon>Mus</taxon>
    </lineage>
</organism>
<feature type="chain" id="PRO_0000076681" description="Cytoplasmic aconitate hydratase">
    <location>
        <begin position="1"/>
        <end position="889"/>
    </location>
</feature>
<feature type="binding site" evidence="1">
    <location>
        <position position="86"/>
    </location>
    <ligand>
        <name>substrate</name>
    </ligand>
</feature>
<feature type="binding site" evidence="1">
    <location>
        <begin position="205"/>
        <end position="207"/>
    </location>
    <ligand>
        <name>substrate</name>
    </ligand>
</feature>
<feature type="binding site" evidence="1">
    <location>
        <position position="437"/>
    </location>
    <ligand>
        <name>[4Fe-4S] cluster</name>
        <dbReference type="ChEBI" id="CHEBI:49883"/>
    </ligand>
</feature>
<feature type="binding site" evidence="1">
    <location>
        <position position="503"/>
    </location>
    <ligand>
        <name>[4Fe-4S] cluster</name>
        <dbReference type="ChEBI" id="CHEBI:49883"/>
    </ligand>
</feature>
<feature type="binding site" evidence="1">
    <location>
        <position position="506"/>
    </location>
    <ligand>
        <name>[4Fe-4S] cluster</name>
        <dbReference type="ChEBI" id="CHEBI:49883"/>
    </ligand>
</feature>
<feature type="binding site" evidence="1">
    <location>
        <position position="536"/>
    </location>
    <ligand>
        <name>substrate</name>
    </ligand>
</feature>
<feature type="binding site" evidence="1">
    <location>
        <position position="541"/>
    </location>
    <ligand>
        <name>substrate</name>
    </ligand>
</feature>
<feature type="binding site" evidence="1">
    <location>
        <position position="699"/>
    </location>
    <ligand>
        <name>substrate</name>
    </ligand>
</feature>
<feature type="binding site" evidence="1">
    <location>
        <begin position="779"/>
        <end position="780"/>
    </location>
    <ligand>
        <name>substrate</name>
    </ligand>
</feature>
<feature type="sequence conflict" description="In Ref. 5; AAH05454." evidence="4" ref="5">
    <original>P</original>
    <variation>S</variation>
    <location>
        <position position="406"/>
    </location>
</feature>
<feature type="sequence conflict" description="In Ref. 5; AAH05454." evidence="4" ref="5">
    <original>S</original>
    <variation>N</variation>
    <location>
        <position position="418"/>
    </location>
</feature>
<feature type="sequence conflict" description="In Ref. 1; CAA43455." evidence="4" ref="1">
    <original>S</original>
    <variation>T</variation>
    <location>
        <position position="436"/>
    </location>
</feature>
<feature type="sequence conflict" description="In Ref. 5; AAH05454." evidence="4" ref="5">
    <original>H</original>
    <variation>Y</variation>
    <location>
        <position position="603"/>
    </location>
</feature>
<evidence type="ECO:0000250" key="1"/>
<evidence type="ECO:0000250" key="2">
    <source>
        <dbReference type="UniProtKB" id="P21399"/>
    </source>
</evidence>
<evidence type="ECO:0000269" key="3">
    <source>
    </source>
</evidence>
<evidence type="ECO:0000305" key="4"/>
<protein>
    <recommendedName>
        <fullName evidence="4">Cytoplasmic aconitate hydratase</fullName>
        <shortName>Aconitase</shortName>
        <ecNumber evidence="2">4.2.1.3</ecNumber>
    </recommendedName>
    <alternativeName>
        <fullName>Citrate hydro-lyase</fullName>
    </alternativeName>
    <alternativeName>
        <fullName>Iron regulatory protein 1</fullName>
        <shortName>IRP1</shortName>
    </alternativeName>
    <alternativeName>
        <fullName>Iron-responsive element-binding protein 1</fullName>
        <shortName>IRE-BP 1</shortName>
    </alternativeName>
</protein>
<name>ACOHC_MOUSE</name>
<reference key="1">
    <citation type="journal article" date="1991" name="Nucleic Acids Res.">
        <title>Sequence and expression of the murine iron-responsive element binding protein.</title>
        <authorList>
            <person name="Philpott C.C."/>
            <person name="Rouault T.A."/>
            <person name="Klausner R.D."/>
        </authorList>
    </citation>
    <scope>NUCLEOTIDE SEQUENCE [MRNA]</scope>
    <scope>FUNCTION</scope>
</reference>
<reference key="2">
    <citation type="journal article" date="2005" name="Science">
        <title>The transcriptional landscape of the mammalian genome.</title>
        <authorList>
            <person name="Carninci P."/>
            <person name="Kasukawa T."/>
            <person name="Katayama S."/>
            <person name="Gough J."/>
            <person name="Frith M.C."/>
            <person name="Maeda N."/>
            <person name="Oyama R."/>
            <person name="Ravasi T."/>
            <person name="Lenhard B."/>
            <person name="Wells C."/>
            <person name="Kodzius R."/>
            <person name="Shimokawa K."/>
            <person name="Bajic V.B."/>
            <person name="Brenner S.E."/>
            <person name="Batalov S."/>
            <person name="Forrest A.R."/>
            <person name="Zavolan M."/>
            <person name="Davis M.J."/>
            <person name="Wilming L.G."/>
            <person name="Aidinis V."/>
            <person name="Allen J.E."/>
            <person name="Ambesi-Impiombato A."/>
            <person name="Apweiler R."/>
            <person name="Aturaliya R.N."/>
            <person name="Bailey T.L."/>
            <person name="Bansal M."/>
            <person name="Baxter L."/>
            <person name="Beisel K.W."/>
            <person name="Bersano T."/>
            <person name="Bono H."/>
            <person name="Chalk A.M."/>
            <person name="Chiu K.P."/>
            <person name="Choudhary V."/>
            <person name="Christoffels A."/>
            <person name="Clutterbuck D.R."/>
            <person name="Crowe M.L."/>
            <person name="Dalla E."/>
            <person name="Dalrymple B.P."/>
            <person name="de Bono B."/>
            <person name="Della Gatta G."/>
            <person name="di Bernardo D."/>
            <person name="Down T."/>
            <person name="Engstrom P."/>
            <person name="Fagiolini M."/>
            <person name="Faulkner G."/>
            <person name="Fletcher C.F."/>
            <person name="Fukushima T."/>
            <person name="Furuno M."/>
            <person name="Futaki S."/>
            <person name="Gariboldi M."/>
            <person name="Georgii-Hemming P."/>
            <person name="Gingeras T.R."/>
            <person name="Gojobori T."/>
            <person name="Green R.E."/>
            <person name="Gustincich S."/>
            <person name="Harbers M."/>
            <person name="Hayashi Y."/>
            <person name="Hensch T.K."/>
            <person name="Hirokawa N."/>
            <person name="Hill D."/>
            <person name="Huminiecki L."/>
            <person name="Iacono M."/>
            <person name="Ikeo K."/>
            <person name="Iwama A."/>
            <person name="Ishikawa T."/>
            <person name="Jakt M."/>
            <person name="Kanapin A."/>
            <person name="Katoh M."/>
            <person name="Kawasawa Y."/>
            <person name="Kelso J."/>
            <person name="Kitamura H."/>
            <person name="Kitano H."/>
            <person name="Kollias G."/>
            <person name="Krishnan S.P."/>
            <person name="Kruger A."/>
            <person name="Kummerfeld S.K."/>
            <person name="Kurochkin I.V."/>
            <person name="Lareau L.F."/>
            <person name="Lazarevic D."/>
            <person name="Lipovich L."/>
            <person name="Liu J."/>
            <person name="Liuni S."/>
            <person name="McWilliam S."/>
            <person name="Madan Babu M."/>
            <person name="Madera M."/>
            <person name="Marchionni L."/>
            <person name="Matsuda H."/>
            <person name="Matsuzawa S."/>
            <person name="Miki H."/>
            <person name="Mignone F."/>
            <person name="Miyake S."/>
            <person name="Morris K."/>
            <person name="Mottagui-Tabar S."/>
            <person name="Mulder N."/>
            <person name="Nakano N."/>
            <person name="Nakauchi H."/>
            <person name="Ng P."/>
            <person name="Nilsson R."/>
            <person name="Nishiguchi S."/>
            <person name="Nishikawa S."/>
            <person name="Nori F."/>
            <person name="Ohara O."/>
            <person name="Okazaki Y."/>
            <person name="Orlando V."/>
            <person name="Pang K.C."/>
            <person name="Pavan W.J."/>
            <person name="Pavesi G."/>
            <person name="Pesole G."/>
            <person name="Petrovsky N."/>
            <person name="Piazza S."/>
            <person name="Reed J."/>
            <person name="Reid J.F."/>
            <person name="Ring B.Z."/>
            <person name="Ringwald M."/>
            <person name="Rost B."/>
            <person name="Ruan Y."/>
            <person name="Salzberg S.L."/>
            <person name="Sandelin A."/>
            <person name="Schneider C."/>
            <person name="Schoenbach C."/>
            <person name="Sekiguchi K."/>
            <person name="Semple C.A."/>
            <person name="Seno S."/>
            <person name="Sessa L."/>
            <person name="Sheng Y."/>
            <person name="Shibata Y."/>
            <person name="Shimada H."/>
            <person name="Shimada K."/>
            <person name="Silva D."/>
            <person name="Sinclair B."/>
            <person name="Sperling S."/>
            <person name="Stupka E."/>
            <person name="Sugiura K."/>
            <person name="Sultana R."/>
            <person name="Takenaka Y."/>
            <person name="Taki K."/>
            <person name="Tammoja K."/>
            <person name="Tan S.L."/>
            <person name="Tang S."/>
            <person name="Taylor M.S."/>
            <person name="Tegner J."/>
            <person name="Teichmann S.A."/>
            <person name="Ueda H.R."/>
            <person name="van Nimwegen E."/>
            <person name="Verardo R."/>
            <person name="Wei C.L."/>
            <person name="Yagi K."/>
            <person name="Yamanishi H."/>
            <person name="Zabarovsky E."/>
            <person name="Zhu S."/>
            <person name="Zimmer A."/>
            <person name="Hide W."/>
            <person name="Bult C."/>
            <person name="Grimmond S.M."/>
            <person name="Teasdale R.D."/>
            <person name="Liu E.T."/>
            <person name="Brusic V."/>
            <person name="Quackenbush J."/>
            <person name="Wahlestedt C."/>
            <person name="Mattick J.S."/>
            <person name="Hume D.A."/>
            <person name="Kai C."/>
            <person name="Sasaki D."/>
            <person name="Tomaru Y."/>
            <person name="Fukuda S."/>
            <person name="Kanamori-Katayama M."/>
            <person name="Suzuki M."/>
            <person name="Aoki J."/>
            <person name="Arakawa T."/>
            <person name="Iida J."/>
            <person name="Imamura K."/>
            <person name="Itoh M."/>
            <person name="Kato T."/>
            <person name="Kawaji H."/>
            <person name="Kawagashira N."/>
            <person name="Kawashima T."/>
            <person name="Kojima M."/>
            <person name="Kondo S."/>
            <person name="Konno H."/>
            <person name="Nakano K."/>
            <person name="Ninomiya N."/>
            <person name="Nishio T."/>
            <person name="Okada M."/>
            <person name="Plessy C."/>
            <person name="Shibata K."/>
            <person name="Shiraki T."/>
            <person name="Suzuki S."/>
            <person name="Tagami M."/>
            <person name="Waki K."/>
            <person name="Watahiki A."/>
            <person name="Okamura-Oho Y."/>
            <person name="Suzuki H."/>
            <person name="Kawai J."/>
            <person name="Hayashizaki Y."/>
        </authorList>
    </citation>
    <scope>NUCLEOTIDE SEQUENCE [LARGE SCALE MRNA]</scope>
    <source>
        <strain>C57BL/6J</strain>
    </source>
</reference>
<reference key="3">
    <citation type="journal article" date="2009" name="PLoS Biol.">
        <title>Lineage-specific biology revealed by a finished genome assembly of the mouse.</title>
        <authorList>
            <person name="Church D.M."/>
            <person name="Goodstadt L."/>
            <person name="Hillier L.W."/>
            <person name="Zody M.C."/>
            <person name="Goldstein S."/>
            <person name="She X."/>
            <person name="Bult C.J."/>
            <person name="Agarwala R."/>
            <person name="Cherry J.L."/>
            <person name="DiCuccio M."/>
            <person name="Hlavina W."/>
            <person name="Kapustin Y."/>
            <person name="Meric P."/>
            <person name="Maglott D."/>
            <person name="Birtle Z."/>
            <person name="Marques A.C."/>
            <person name="Graves T."/>
            <person name="Zhou S."/>
            <person name="Teague B."/>
            <person name="Potamousis K."/>
            <person name="Churas C."/>
            <person name="Place M."/>
            <person name="Herschleb J."/>
            <person name="Runnheim R."/>
            <person name="Forrest D."/>
            <person name="Amos-Landgraf J."/>
            <person name="Schwartz D.C."/>
            <person name="Cheng Z."/>
            <person name="Lindblad-Toh K."/>
            <person name="Eichler E.E."/>
            <person name="Ponting C.P."/>
        </authorList>
    </citation>
    <scope>NUCLEOTIDE SEQUENCE [LARGE SCALE GENOMIC DNA]</scope>
    <source>
        <strain>C57BL/6J</strain>
    </source>
</reference>
<reference key="4">
    <citation type="submission" date="2005-09" db="EMBL/GenBank/DDBJ databases">
        <authorList>
            <person name="Mural R.J."/>
            <person name="Adams M.D."/>
            <person name="Myers E.W."/>
            <person name="Smith H.O."/>
            <person name="Venter J.C."/>
        </authorList>
    </citation>
    <scope>NUCLEOTIDE SEQUENCE [LARGE SCALE GENOMIC DNA]</scope>
</reference>
<reference key="5">
    <citation type="journal article" date="2004" name="Genome Res.">
        <title>The status, quality, and expansion of the NIH full-length cDNA project: the Mammalian Gene Collection (MGC).</title>
        <authorList>
            <consortium name="The MGC Project Team"/>
        </authorList>
    </citation>
    <scope>NUCLEOTIDE SEQUENCE [LARGE SCALE MRNA]</scope>
</reference>
<reference key="6">
    <citation type="journal article" date="2010" name="Cell">
        <title>A tissue-specific atlas of mouse protein phosphorylation and expression.</title>
        <authorList>
            <person name="Huttlin E.L."/>
            <person name="Jedrychowski M.P."/>
            <person name="Elias J.E."/>
            <person name="Goswami T."/>
            <person name="Rad R."/>
            <person name="Beausoleil S.A."/>
            <person name="Villen J."/>
            <person name="Haas W."/>
            <person name="Sowa M.E."/>
            <person name="Gygi S.P."/>
        </authorList>
    </citation>
    <scope>IDENTIFICATION BY MASS SPECTROMETRY [LARGE SCALE ANALYSIS]</scope>
    <source>
        <tissue>Brain</tissue>
        <tissue>Brown adipose tissue</tissue>
        <tissue>Heart</tissue>
        <tissue>Kidney</tissue>
        <tissue>Liver</tissue>
        <tissue>Lung</tissue>
        <tissue>Pancreas</tissue>
        <tissue>Spleen</tissue>
        <tissue>Testis</tissue>
    </source>
</reference>
<keyword id="KW-0004">4Fe-4S</keyword>
<keyword id="KW-0963">Cytoplasm</keyword>
<keyword id="KW-0408">Iron</keyword>
<keyword id="KW-0411">Iron-sulfur</keyword>
<keyword id="KW-0456">Lyase</keyword>
<keyword id="KW-0479">Metal-binding</keyword>
<keyword id="KW-1185">Reference proteome</keyword>
<keyword id="KW-0694">RNA-binding</keyword>
<keyword id="KW-0816">Tricarboxylic acid cycle</keyword>
<comment type="function">
    <text evidence="2 3">Bifunctional iron sensor that switches between 2 activities depending on iron availability (By similarity). Iron deprivation, promotes its mRNA binding activity through which it regulates the expression of genes involved in iron uptake, sequestration and utilization. Binds to iron-responsive elements (IRES) in the untranslated region of target mRNAs preventing for instance the translation of ferritin and aminolevulinic acid synthase and stabilizing the transferrin receptor mRNA (PubMed:1956798).</text>
</comment>
<comment type="function">
    <text evidence="2">Conversely, when cellular iron levels are high, binds a 4Fe-4S cluster which precludes RNA binding activity and promotes the aconitase activity, the isomerization of citrate to isocitrate via cis-aconitate.</text>
</comment>
<comment type="catalytic activity">
    <reaction evidence="2">
        <text>citrate = D-threo-isocitrate</text>
        <dbReference type="Rhea" id="RHEA:10336"/>
        <dbReference type="ChEBI" id="CHEBI:15562"/>
        <dbReference type="ChEBI" id="CHEBI:16947"/>
        <dbReference type="EC" id="4.2.1.3"/>
    </reaction>
</comment>
<comment type="cofactor">
    <cofactor evidence="2">
        <name>[4Fe-4S] cluster</name>
        <dbReference type="ChEBI" id="CHEBI:49883"/>
    </cofactor>
    <text evidence="2">Binds 1 [4Fe-4S] cluster per subunit.</text>
</comment>
<comment type="subunit">
    <text evidence="2">Interacts (when associated with the 4Fe-4S) with FBXL5. Interacts with frataxin(81-210).</text>
</comment>
<comment type="subcellular location">
    <subcellularLocation>
        <location evidence="2">Cytoplasm</location>
        <location evidence="2">Cytosol</location>
    </subcellularLocation>
</comment>
<comment type="similarity">
    <text evidence="4">Belongs to the aconitase/IPM isomerase family.</text>
</comment>
<proteinExistence type="evidence at protein level"/>